<sequence length="248" mass="27584">MSGHSKWANIKRQKGAADAVRGKIFTKLGREIQIAVRMGGADPSSNSKLKDVIAKCKANNMPNDNIQRSIKRASGETDGSNYEEITYEGYGPGGVAVICECTTDNRNRTAGDLRHYFDKFGGNLGQSGCVSYMFNKKGVIVIEKNDKVNEETLMMEALDAGAEDFDSDDNCYEIITDPADFSTVREALEAKGYEFIEAEVSMIPTTTTKLTDPEQIKFMDKLIEALEDLDDVSNVYHSWEQDEENEEE</sequence>
<gene>
    <name type="ordered locus">Ccel_0181</name>
</gene>
<comment type="subcellular location">
    <subcellularLocation>
        <location evidence="1">Cytoplasm</location>
    </subcellularLocation>
</comment>
<comment type="similarity">
    <text evidence="1">Belongs to the TACO1 family.</text>
</comment>
<evidence type="ECO:0000255" key="1">
    <source>
        <dbReference type="HAMAP-Rule" id="MF_00693"/>
    </source>
</evidence>
<protein>
    <recommendedName>
        <fullName evidence="1">Probable transcriptional regulatory protein Ccel_0181</fullName>
    </recommendedName>
</protein>
<organism>
    <name type="scientific">Ruminiclostridium cellulolyticum (strain ATCC 35319 / DSM 5812 / JCM 6584 / H10)</name>
    <name type="common">Clostridium cellulolyticum</name>
    <dbReference type="NCBI Taxonomy" id="394503"/>
    <lineage>
        <taxon>Bacteria</taxon>
        <taxon>Bacillati</taxon>
        <taxon>Bacillota</taxon>
        <taxon>Clostridia</taxon>
        <taxon>Eubacteriales</taxon>
        <taxon>Oscillospiraceae</taxon>
        <taxon>Ruminiclostridium</taxon>
    </lineage>
</organism>
<proteinExistence type="inferred from homology"/>
<dbReference type="EMBL" id="CP001348">
    <property type="protein sequence ID" value="ACL74569.1"/>
    <property type="molecule type" value="Genomic_DNA"/>
</dbReference>
<dbReference type="RefSeq" id="WP_012634634.1">
    <property type="nucleotide sequence ID" value="NC_011898.1"/>
</dbReference>
<dbReference type="SMR" id="B8I4L5"/>
<dbReference type="STRING" id="394503.Ccel_0181"/>
<dbReference type="KEGG" id="cce:Ccel_0181"/>
<dbReference type="eggNOG" id="COG0217">
    <property type="taxonomic scope" value="Bacteria"/>
</dbReference>
<dbReference type="HOGENOM" id="CLU_062974_2_2_9"/>
<dbReference type="OrthoDB" id="9781053at2"/>
<dbReference type="Proteomes" id="UP000001349">
    <property type="component" value="Chromosome"/>
</dbReference>
<dbReference type="GO" id="GO:0005829">
    <property type="term" value="C:cytosol"/>
    <property type="evidence" value="ECO:0007669"/>
    <property type="project" value="TreeGrafter"/>
</dbReference>
<dbReference type="GO" id="GO:0003677">
    <property type="term" value="F:DNA binding"/>
    <property type="evidence" value="ECO:0007669"/>
    <property type="project" value="UniProtKB-UniRule"/>
</dbReference>
<dbReference type="GO" id="GO:0006355">
    <property type="term" value="P:regulation of DNA-templated transcription"/>
    <property type="evidence" value="ECO:0007669"/>
    <property type="project" value="UniProtKB-UniRule"/>
</dbReference>
<dbReference type="FunFam" id="1.10.10.200:FF:000002">
    <property type="entry name" value="Probable transcriptional regulatory protein CLM62_37755"/>
    <property type="match status" value="1"/>
</dbReference>
<dbReference type="FunFam" id="3.30.70.980:FF:000002">
    <property type="entry name" value="Probable transcriptional regulatory protein YebC"/>
    <property type="match status" value="1"/>
</dbReference>
<dbReference type="Gene3D" id="1.10.10.200">
    <property type="match status" value="1"/>
</dbReference>
<dbReference type="Gene3D" id="3.30.70.980">
    <property type="match status" value="2"/>
</dbReference>
<dbReference type="HAMAP" id="MF_00693">
    <property type="entry name" value="Transcrip_reg_TACO1"/>
    <property type="match status" value="1"/>
</dbReference>
<dbReference type="InterPro" id="IPR017856">
    <property type="entry name" value="Integrase-like_N"/>
</dbReference>
<dbReference type="InterPro" id="IPR048300">
    <property type="entry name" value="TACO1_YebC-like_2nd/3rd_dom"/>
</dbReference>
<dbReference type="InterPro" id="IPR049083">
    <property type="entry name" value="TACO1_YebC_N"/>
</dbReference>
<dbReference type="InterPro" id="IPR002876">
    <property type="entry name" value="Transcrip_reg_TACO1-like"/>
</dbReference>
<dbReference type="InterPro" id="IPR026564">
    <property type="entry name" value="Transcrip_reg_TACO1-like_dom3"/>
</dbReference>
<dbReference type="InterPro" id="IPR029072">
    <property type="entry name" value="YebC-like"/>
</dbReference>
<dbReference type="NCBIfam" id="NF001030">
    <property type="entry name" value="PRK00110.1"/>
    <property type="match status" value="1"/>
</dbReference>
<dbReference type="NCBIfam" id="NF009044">
    <property type="entry name" value="PRK12378.1"/>
    <property type="match status" value="1"/>
</dbReference>
<dbReference type="NCBIfam" id="TIGR01033">
    <property type="entry name" value="YebC/PmpR family DNA-binding transcriptional regulator"/>
    <property type="match status" value="1"/>
</dbReference>
<dbReference type="PANTHER" id="PTHR12532:SF6">
    <property type="entry name" value="TRANSCRIPTIONAL REGULATORY PROTEIN YEBC-RELATED"/>
    <property type="match status" value="1"/>
</dbReference>
<dbReference type="PANTHER" id="PTHR12532">
    <property type="entry name" value="TRANSLATIONAL ACTIVATOR OF CYTOCHROME C OXIDASE 1"/>
    <property type="match status" value="1"/>
</dbReference>
<dbReference type="Pfam" id="PF20772">
    <property type="entry name" value="TACO1_YebC_N"/>
    <property type="match status" value="1"/>
</dbReference>
<dbReference type="Pfam" id="PF01709">
    <property type="entry name" value="Transcrip_reg"/>
    <property type="match status" value="1"/>
</dbReference>
<dbReference type="SUPFAM" id="SSF75625">
    <property type="entry name" value="YebC-like"/>
    <property type="match status" value="1"/>
</dbReference>
<name>Y181_RUMCH</name>
<reference key="1">
    <citation type="submission" date="2009-01" db="EMBL/GenBank/DDBJ databases">
        <title>Complete sequence of Clostridium cellulolyticum H10.</title>
        <authorList>
            <consortium name="US DOE Joint Genome Institute"/>
            <person name="Lucas S."/>
            <person name="Copeland A."/>
            <person name="Lapidus A."/>
            <person name="Glavina del Rio T."/>
            <person name="Dalin E."/>
            <person name="Tice H."/>
            <person name="Bruce D."/>
            <person name="Goodwin L."/>
            <person name="Pitluck S."/>
            <person name="Chertkov O."/>
            <person name="Saunders E."/>
            <person name="Brettin T."/>
            <person name="Detter J.C."/>
            <person name="Han C."/>
            <person name="Larimer F."/>
            <person name="Land M."/>
            <person name="Hauser L."/>
            <person name="Kyrpides N."/>
            <person name="Ivanova N."/>
            <person name="Zhou J."/>
            <person name="Richardson P."/>
        </authorList>
    </citation>
    <scope>NUCLEOTIDE SEQUENCE [LARGE SCALE GENOMIC DNA]</scope>
    <source>
        <strain>ATCC 35319 / DSM 5812 / JCM 6584 / H10</strain>
    </source>
</reference>
<accession>B8I4L5</accession>
<keyword id="KW-0963">Cytoplasm</keyword>
<keyword id="KW-0238">DNA-binding</keyword>
<keyword id="KW-1185">Reference proteome</keyword>
<keyword id="KW-0804">Transcription</keyword>
<keyword id="KW-0805">Transcription regulation</keyword>
<feature type="chain" id="PRO_1000200089" description="Probable transcriptional regulatory protein Ccel_0181">
    <location>
        <begin position="1"/>
        <end position="248"/>
    </location>
</feature>